<proteinExistence type="inferred from homology"/>
<keyword id="KW-0119">Carbohydrate metabolism</keyword>
<keyword id="KW-0963">Cytoplasm</keyword>
<keyword id="KW-0413">Isomerase</keyword>
<keyword id="KW-0460">Magnesium</keyword>
<keyword id="KW-0479">Metal-binding</keyword>
<keyword id="KW-0859">Xylose metabolism</keyword>
<gene>
    <name evidence="1" type="primary">xylA</name>
    <name type="ordered locus">BPUM_1829</name>
</gene>
<feature type="chain" id="PRO_1000060318" description="Xylose isomerase">
    <location>
        <begin position="1"/>
        <end position="445"/>
    </location>
</feature>
<feature type="active site" evidence="1">
    <location>
        <position position="107"/>
    </location>
</feature>
<feature type="active site" evidence="1">
    <location>
        <position position="110"/>
    </location>
</feature>
<feature type="binding site" evidence="1">
    <location>
        <position position="238"/>
    </location>
    <ligand>
        <name>Mg(2+)</name>
        <dbReference type="ChEBI" id="CHEBI:18420"/>
        <label>1</label>
    </ligand>
</feature>
<feature type="binding site" evidence="1">
    <location>
        <position position="274"/>
    </location>
    <ligand>
        <name>Mg(2+)</name>
        <dbReference type="ChEBI" id="CHEBI:18420"/>
        <label>1</label>
    </ligand>
</feature>
<feature type="binding site" evidence="1">
    <location>
        <position position="274"/>
    </location>
    <ligand>
        <name>Mg(2+)</name>
        <dbReference type="ChEBI" id="CHEBI:18420"/>
        <label>2</label>
    </ligand>
</feature>
<feature type="binding site" evidence="1">
    <location>
        <position position="277"/>
    </location>
    <ligand>
        <name>Mg(2+)</name>
        <dbReference type="ChEBI" id="CHEBI:18420"/>
        <label>2</label>
    </ligand>
</feature>
<feature type="binding site" evidence="1">
    <location>
        <position position="302"/>
    </location>
    <ligand>
        <name>Mg(2+)</name>
        <dbReference type="ChEBI" id="CHEBI:18420"/>
        <label>1</label>
    </ligand>
</feature>
<feature type="binding site" evidence="1">
    <location>
        <position position="313"/>
    </location>
    <ligand>
        <name>Mg(2+)</name>
        <dbReference type="ChEBI" id="CHEBI:18420"/>
        <label>2</label>
    </ligand>
</feature>
<feature type="binding site" evidence="1">
    <location>
        <position position="315"/>
    </location>
    <ligand>
        <name>Mg(2+)</name>
        <dbReference type="ChEBI" id="CHEBI:18420"/>
        <label>2</label>
    </ligand>
</feature>
<feature type="binding site" evidence="1">
    <location>
        <position position="345"/>
    </location>
    <ligand>
        <name>Mg(2+)</name>
        <dbReference type="ChEBI" id="CHEBI:18420"/>
        <label>1</label>
    </ligand>
</feature>
<reference key="1">
    <citation type="journal article" date="2007" name="PLoS ONE">
        <title>Paradoxical DNA repair and peroxide resistance gene conservation in Bacillus pumilus SAFR-032.</title>
        <authorList>
            <person name="Gioia J."/>
            <person name="Yerrapragada S."/>
            <person name="Qin X."/>
            <person name="Jiang H."/>
            <person name="Igboeli O.C."/>
            <person name="Muzny D."/>
            <person name="Dugan-Rocha S."/>
            <person name="Ding Y."/>
            <person name="Hawes A."/>
            <person name="Liu W."/>
            <person name="Perez L."/>
            <person name="Kovar C."/>
            <person name="Dinh H."/>
            <person name="Lee S."/>
            <person name="Nazareth L."/>
            <person name="Blyth P."/>
            <person name="Holder M."/>
            <person name="Buhay C."/>
            <person name="Tirumalai M.R."/>
            <person name="Liu Y."/>
            <person name="Dasgupta I."/>
            <person name="Bokhetache L."/>
            <person name="Fujita M."/>
            <person name="Karouia F."/>
            <person name="Eswara Moorthy P."/>
            <person name="Siefert J."/>
            <person name="Uzman A."/>
            <person name="Buzumbo P."/>
            <person name="Verma A."/>
            <person name="Zwiya H."/>
            <person name="McWilliams B.D."/>
            <person name="Olowu A."/>
            <person name="Clinkenbeard K.D."/>
            <person name="Newcombe D."/>
            <person name="Golebiewski L."/>
            <person name="Petrosino J.F."/>
            <person name="Nicholson W.L."/>
            <person name="Fox G.E."/>
            <person name="Venkateswaran K."/>
            <person name="Highlander S.K."/>
            <person name="Weinstock G.M."/>
        </authorList>
    </citation>
    <scope>NUCLEOTIDE SEQUENCE [LARGE SCALE GENOMIC DNA]</scope>
    <source>
        <strain>SAFR-032</strain>
    </source>
</reference>
<comment type="catalytic activity">
    <reaction evidence="1">
        <text>alpha-D-xylose = alpha-D-xylulofuranose</text>
        <dbReference type="Rhea" id="RHEA:22816"/>
        <dbReference type="ChEBI" id="CHEBI:28518"/>
        <dbReference type="ChEBI" id="CHEBI:188998"/>
        <dbReference type="EC" id="5.3.1.5"/>
    </reaction>
</comment>
<comment type="cofactor">
    <cofactor evidence="1">
        <name>Mg(2+)</name>
        <dbReference type="ChEBI" id="CHEBI:18420"/>
    </cofactor>
    <text evidence="1">Binds 2 magnesium ions per subunit.</text>
</comment>
<comment type="subunit">
    <text evidence="1">Homotetramer.</text>
</comment>
<comment type="subcellular location">
    <subcellularLocation>
        <location evidence="1">Cytoplasm</location>
    </subcellularLocation>
</comment>
<comment type="similarity">
    <text evidence="1">Belongs to the xylose isomerase family.</text>
</comment>
<accession>A8FE33</accession>
<organism>
    <name type="scientific">Bacillus pumilus (strain SAFR-032)</name>
    <dbReference type="NCBI Taxonomy" id="315750"/>
    <lineage>
        <taxon>Bacteria</taxon>
        <taxon>Bacillati</taxon>
        <taxon>Bacillota</taxon>
        <taxon>Bacilli</taxon>
        <taxon>Bacillales</taxon>
        <taxon>Bacillaceae</taxon>
        <taxon>Bacillus</taxon>
    </lineage>
</organism>
<protein>
    <recommendedName>
        <fullName evidence="1">Xylose isomerase</fullName>
        <ecNumber evidence="1">5.3.1.5</ecNumber>
    </recommendedName>
</protein>
<evidence type="ECO:0000255" key="1">
    <source>
        <dbReference type="HAMAP-Rule" id="MF_00455"/>
    </source>
</evidence>
<name>XYLA_BACP2</name>
<sequence>MANSNMKTLHSLEGIGKIQFEGKQSKNPLAFKSYNPSEVIGGKTMKDHLRFSVAYWHTLTADGTDMFGTGTMQRAWDSYSGMDLAKARLEVAFQLFDLLDVPYFSFHDRDIAPEGDTLQETNQHLDIILERMKEYMRDSGVKLLWNTANMFKHPRFVHGAATSCHADVFAYAAAQVKKGIETAKELRAENYVFWGGREGYDTLLNTDMKRELDHMASFLHMAVDYAKEIGYTGQFLIEPKPKEPTTHQYDADAATSIAFLKQYGLDTHFKLNIEANHATLAGHTFEHELRVARIHGLLGSVDANQGNTLLGWDTDEFPTDLYATTLAMYEILQNGGLGTGGLNFDAKVRRASFELEDILYAHIAGMDAFAKGLRVAHRLIEDRVFEDVIKHRYRSFSEGIGRDISEGKANFHILEEYALKHPLIRNESGREEQLKARLNQYLLED</sequence>
<dbReference type="EC" id="5.3.1.5" evidence="1"/>
<dbReference type="EMBL" id="CP000813">
    <property type="protein sequence ID" value="ABV62500.1"/>
    <property type="molecule type" value="Genomic_DNA"/>
</dbReference>
<dbReference type="RefSeq" id="WP_012010225.1">
    <property type="nucleotide sequence ID" value="NC_009848.4"/>
</dbReference>
<dbReference type="SMR" id="A8FE33"/>
<dbReference type="STRING" id="315750.BPUM_1829"/>
<dbReference type="GeneID" id="5621091"/>
<dbReference type="KEGG" id="bpu:BPUM_1829"/>
<dbReference type="eggNOG" id="COG2115">
    <property type="taxonomic scope" value="Bacteria"/>
</dbReference>
<dbReference type="HOGENOM" id="CLU_037261_1_0_9"/>
<dbReference type="OrthoDB" id="9763981at2"/>
<dbReference type="Proteomes" id="UP000001355">
    <property type="component" value="Chromosome"/>
</dbReference>
<dbReference type="GO" id="GO:0005737">
    <property type="term" value="C:cytoplasm"/>
    <property type="evidence" value="ECO:0007669"/>
    <property type="project" value="UniProtKB-SubCell"/>
</dbReference>
<dbReference type="GO" id="GO:0000287">
    <property type="term" value="F:magnesium ion binding"/>
    <property type="evidence" value="ECO:0007669"/>
    <property type="project" value="UniProtKB-UniRule"/>
</dbReference>
<dbReference type="GO" id="GO:0009045">
    <property type="term" value="F:xylose isomerase activity"/>
    <property type="evidence" value="ECO:0007669"/>
    <property type="project" value="UniProtKB-UniRule"/>
</dbReference>
<dbReference type="GO" id="GO:0042732">
    <property type="term" value="P:D-xylose metabolic process"/>
    <property type="evidence" value="ECO:0007669"/>
    <property type="project" value="UniProtKB-UniRule"/>
</dbReference>
<dbReference type="FunFam" id="3.20.20.150:FF:000002">
    <property type="entry name" value="Xylose isomerase"/>
    <property type="match status" value="1"/>
</dbReference>
<dbReference type="Gene3D" id="3.20.20.150">
    <property type="entry name" value="Divalent-metal-dependent TIM barrel enzymes"/>
    <property type="match status" value="1"/>
</dbReference>
<dbReference type="HAMAP" id="MF_00455">
    <property type="entry name" value="Xylose_isom_A"/>
    <property type="match status" value="1"/>
</dbReference>
<dbReference type="InterPro" id="IPR036237">
    <property type="entry name" value="Xyl_isomerase-like_sf"/>
</dbReference>
<dbReference type="InterPro" id="IPR013022">
    <property type="entry name" value="Xyl_isomerase-like_TIM-brl"/>
</dbReference>
<dbReference type="InterPro" id="IPR013452">
    <property type="entry name" value="Xylose_isom_bac"/>
</dbReference>
<dbReference type="InterPro" id="IPR001998">
    <property type="entry name" value="Xylose_isomerase"/>
</dbReference>
<dbReference type="NCBIfam" id="NF003998">
    <property type="entry name" value="PRK05474.1"/>
    <property type="match status" value="1"/>
</dbReference>
<dbReference type="NCBIfam" id="TIGR02630">
    <property type="entry name" value="xylose_isom_A"/>
    <property type="match status" value="1"/>
</dbReference>
<dbReference type="PANTHER" id="PTHR48408">
    <property type="match status" value="1"/>
</dbReference>
<dbReference type="PANTHER" id="PTHR48408:SF1">
    <property type="entry name" value="XYLOSE ISOMERASE"/>
    <property type="match status" value="1"/>
</dbReference>
<dbReference type="Pfam" id="PF01261">
    <property type="entry name" value="AP_endonuc_2"/>
    <property type="match status" value="1"/>
</dbReference>
<dbReference type="PRINTS" id="PR00688">
    <property type="entry name" value="XYLOSISMRASE"/>
</dbReference>
<dbReference type="SUPFAM" id="SSF51658">
    <property type="entry name" value="Xylose isomerase-like"/>
    <property type="match status" value="1"/>
</dbReference>
<dbReference type="PROSITE" id="PS51415">
    <property type="entry name" value="XYLOSE_ISOMERASE"/>
    <property type="match status" value="1"/>
</dbReference>